<reference key="1">
    <citation type="journal article" date="2004" name="Nat. Biotechnol.">
        <title>The genome sequence of the anaerobic, sulfate-reducing bacterium Desulfovibrio vulgaris Hildenborough.</title>
        <authorList>
            <person name="Heidelberg J.F."/>
            <person name="Seshadri R."/>
            <person name="Haveman S.A."/>
            <person name="Hemme C.L."/>
            <person name="Paulsen I.T."/>
            <person name="Kolonay J.F."/>
            <person name="Eisen J.A."/>
            <person name="Ward N.L."/>
            <person name="Methe B.A."/>
            <person name="Brinkac L.M."/>
            <person name="Daugherty S.C."/>
            <person name="DeBoy R.T."/>
            <person name="Dodson R.J."/>
            <person name="Durkin A.S."/>
            <person name="Madupu R."/>
            <person name="Nelson W.C."/>
            <person name="Sullivan S.A."/>
            <person name="Fouts D.E."/>
            <person name="Haft D.H."/>
            <person name="Selengut J."/>
            <person name="Peterson J.D."/>
            <person name="Davidsen T.M."/>
            <person name="Zafar N."/>
            <person name="Zhou L."/>
            <person name="Radune D."/>
            <person name="Dimitrov G."/>
            <person name="Hance M."/>
            <person name="Tran K."/>
            <person name="Khouri H.M."/>
            <person name="Gill J."/>
            <person name="Utterback T.R."/>
            <person name="Feldblyum T.V."/>
            <person name="Wall J.D."/>
            <person name="Voordouw G."/>
            <person name="Fraser C.M."/>
        </authorList>
    </citation>
    <scope>NUCLEOTIDE SEQUENCE [LARGE SCALE GENOMIC DNA]</scope>
    <source>
        <strain>ATCC 29579 / DSM 644 / CCUG 34227 / NCIMB 8303 / VKM B-1760 / Hildenborough</strain>
    </source>
</reference>
<dbReference type="EC" id="2.1.1.14" evidence="1"/>
<dbReference type="EMBL" id="AE017285">
    <property type="protein sequence ID" value="AAS97840.1"/>
    <property type="molecule type" value="Genomic_DNA"/>
</dbReference>
<dbReference type="RefSeq" id="WP_010940626.1">
    <property type="nucleotide sequence ID" value="NC_002937.3"/>
</dbReference>
<dbReference type="RefSeq" id="YP_012580.1">
    <property type="nucleotide sequence ID" value="NC_002937.3"/>
</dbReference>
<dbReference type="SMR" id="Q725Q3"/>
<dbReference type="STRING" id="882.DVU_3371"/>
<dbReference type="PaxDb" id="882-DVU_3371"/>
<dbReference type="EnsemblBacteria" id="AAS97840">
    <property type="protein sequence ID" value="AAS97840"/>
    <property type="gene ID" value="DVU_3371"/>
</dbReference>
<dbReference type="KEGG" id="dvu:DVU_3371"/>
<dbReference type="PATRIC" id="fig|882.5.peg.3060"/>
<dbReference type="eggNOG" id="COG0620">
    <property type="taxonomic scope" value="Bacteria"/>
</dbReference>
<dbReference type="HOGENOM" id="CLU_013175_0_0_7"/>
<dbReference type="OrthoDB" id="244285at2"/>
<dbReference type="PhylomeDB" id="Q725Q3"/>
<dbReference type="UniPathway" id="UPA00051">
    <property type="reaction ID" value="UER00082"/>
</dbReference>
<dbReference type="Proteomes" id="UP000002194">
    <property type="component" value="Chromosome"/>
</dbReference>
<dbReference type="GO" id="GO:0003871">
    <property type="term" value="F:5-methyltetrahydropteroyltriglutamate-homocysteine S-methyltransferase activity"/>
    <property type="evidence" value="ECO:0007669"/>
    <property type="project" value="UniProtKB-UniRule"/>
</dbReference>
<dbReference type="GO" id="GO:0008270">
    <property type="term" value="F:zinc ion binding"/>
    <property type="evidence" value="ECO:0007669"/>
    <property type="project" value="InterPro"/>
</dbReference>
<dbReference type="GO" id="GO:0009086">
    <property type="term" value="P:methionine biosynthetic process"/>
    <property type="evidence" value="ECO:0007669"/>
    <property type="project" value="UniProtKB-UniRule"/>
</dbReference>
<dbReference type="GO" id="GO:0032259">
    <property type="term" value="P:methylation"/>
    <property type="evidence" value="ECO:0007669"/>
    <property type="project" value="UniProtKB-KW"/>
</dbReference>
<dbReference type="CDD" id="cd03311">
    <property type="entry name" value="CIMS_C_terminal_like"/>
    <property type="match status" value="1"/>
</dbReference>
<dbReference type="CDD" id="cd03312">
    <property type="entry name" value="CIMS_N_terminal_like"/>
    <property type="match status" value="1"/>
</dbReference>
<dbReference type="Gene3D" id="3.20.20.210">
    <property type="match status" value="2"/>
</dbReference>
<dbReference type="HAMAP" id="MF_00172">
    <property type="entry name" value="Meth_synth"/>
    <property type="match status" value="1"/>
</dbReference>
<dbReference type="InterPro" id="IPR013215">
    <property type="entry name" value="Cbl-indep_Met_Synth_N"/>
</dbReference>
<dbReference type="InterPro" id="IPR006276">
    <property type="entry name" value="Cobalamin-indep_Met_synthase"/>
</dbReference>
<dbReference type="InterPro" id="IPR002629">
    <property type="entry name" value="Met_Synth_C/arc"/>
</dbReference>
<dbReference type="InterPro" id="IPR038071">
    <property type="entry name" value="UROD/MetE-like_sf"/>
</dbReference>
<dbReference type="NCBIfam" id="TIGR01371">
    <property type="entry name" value="met_syn_B12ind"/>
    <property type="match status" value="1"/>
</dbReference>
<dbReference type="NCBIfam" id="NF003556">
    <property type="entry name" value="PRK05222.1"/>
    <property type="match status" value="1"/>
</dbReference>
<dbReference type="PANTHER" id="PTHR30519">
    <property type="entry name" value="5-METHYLTETRAHYDROPTEROYLTRIGLUTAMATE--HOMOCYSTEINE METHYLTRANSFERASE"/>
    <property type="match status" value="1"/>
</dbReference>
<dbReference type="Pfam" id="PF08267">
    <property type="entry name" value="Meth_synt_1"/>
    <property type="match status" value="1"/>
</dbReference>
<dbReference type="Pfam" id="PF01717">
    <property type="entry name" value="Meth_synt_2"/>
    <property type="match status" value="1"/>
</dbReference>
<dbReference type="PIRSF" id="PIRSF000382">
    <property type="entry name" value="MeTrfase_B12_ind"/>
    <property type="match status" value="1"/>
</dbReference>
<dbReference type="SUPFAM" id="SSF51726">
    <property type="entry name" value="UROD/MetE-like"/>
    <property type="match status" value="2"/>
</dbReference>
<name>METE_NITV2</name>
<gene>
    <name evidence="1" type="primary">metE</name>
    <name type="ordered locus">DVU_3371</name>
</gene>
<sequence length="785" mass="85446">MRTHNLGFPRIGAGRELKKAVEGYWKGRVSRHALEGEAARLRACHWAMQRDAGIDVVPVGDFALYDHMLDLTLMLGAIPPRFSPSGAAASPAGTGQDIDLMFRMARGEAGLSPVAPLEMTKWFDTNYHYLVPELDADTAFAPDASPLVAQLREAQDAGFTPKAVLPGPLTWLWLARSVDGSDRFALLPALCDAYATLLRELTSACPPACPRGYSSGGLMVQLDEPVLALDLPQTVRDLFPAVYTRLRAAVPDATLMVASYFAPCADNLPVALNLPVDVLHLDLVRGRDDLDAALQVLGAGEGTPGLALSLGVVDGRNVWCADIDAAVNLVRRAADSLGEDRVWVAPSCSLLHCPVDLGSERELDPEVARWLAFARQKCAEVRLVAEVVRGVYGPSTAASLEANREVRRQRAVSPRIHDPAVASRLAAVTSDMEHRTSPYAERIVAQRAALHLPTLPTTTIGSFPQTPDIRAARRALRDGSLTQDAYEAAMRDALAMMVREQEALGLDVLVHGEPERNDMVEYFGGLLQGFCITSDGWVQSYGTRCVKPPLLYGDVSRPEPMTVAWSAYARSLTARPMKAMLTGPVTIACWSFVRDDISRETVLRQLALALRDEVADLESAGLAVVQVDEPALREGLPLRRAAQEAYLDAAVRAFRLATSGVADATQLHTHMCYCDFHDIIDRIAGMDADVISLEASRSRMELLDVFATHGYPNEVGPGVYDIHSPRVPSVDEMEALLLRAAAVLPVDRLWVNPDCGLKTREWPETRAALANMVEAARRVRARLDA</sequence>
<feature type="chain" id="PRO_0000098629" description="5-methyltetrahydropteroyltriglutamate--homocysteine methyltransferase">
    <location>
        <begin position="1"/>
        <end position="785"/>
    </location>
</feature>
<feature type="active site" description="Proton donor" evidence="1">
    <location>
        <position position="723"/>
    </location>
</feature>
<feature type="binding site" evidence="1">
    <location>
        <begin position="15"/>
        <end position="18"/>
    </location>
    <ligand>
        <name>5-methyltetrahydropteroyltri-L-glutamate</name>
        <dbReference type="ChEBI" id="CHEBI:58207"/>
    </ligand>
</feature>
<feature type="binding site" evidence="1">
    <location>
        <position position="121"/>
    </location>
    <ligand>
        <name>5-methyltetrahydropteroyltri-L-glutamate</name>
        <dbReference type="ChEBI" id="CHEBI:58207"/>
    </ligand>
</feature>
<feature type="binding site" evidence="1">
    <location>
        <begin position="460"/>
        <end position="462"/>
    </location>
    <ligand>
        <name>L-homocysteine</name>
        <dbReference type="ChEBI" id="CHEBI:58199"/>
    </ligand>
</feature>
<feature type="binding site" evidence="1">
    <location>
        <begin position="460"/>
        <end position="462"/>
    </location>
    <ligand>
        <name>L-methionine</name>
        <dbReference type="ChEBI" id="CHEBI:57844"/>
    </ligand>
</feature>
<feature type="binding site" evidence="1">
    <location>
        <position position="513"/>
    </location>
    <ligand>
        <name>L-homocysteine</name>
        <dbReference type="ChEBI" id="CHEBI:58199"/>
    </ligand>
</feature>
<feature type="binding site" evidence="1">
    <location>
        <position position="513"/>
    </location>
    <ligand>
        <name>L-methionine</name>
        <dbReference type="ChEBI" id="CHEBI:57844"/>
    </ligand>
</feature>
<feature type="binding site" evidence="1">
    <location>
        <begin position="544"/>
        <end position="545"/>
    </location>
    <ligand>
        <name>5-methyltetrahydropteroyltri-L-glutamate</name>
        <dbReference type="ChEBI" id="CHEBI:58207"/>
    </ligand>
</feature>
<feature type="binding site" evidence="1">
    <location>
        <position position="590"/>
    </location>
    <ligand>
        <name>5-methyltetrahydropteroyltri-L-glutamate</name>
        <dbReference type="ChEBI" id="CHEBI:58207"/>
    </ligand>
</feature>
<feature type="binding site" evidence="1">
    <location>
        <position position="628"/>
    </location>
    <ligand>
        <name>L-homocysteine</name>
        <dbReference type="ChEBI" id="CHEBI:58199"/>
    </ligand>
</feature>
<feature type="binding site" evidence="1">
    <location>
        <position position="628"/>
    </location>
    <ligand>
        <name>L-methionine</name>
        <dbReference type="ChEBI" id="CHEBI:57844"/>
    </ligand>
</feature>
<feature type="binding site" evidence="1">
    <location>
        <position position="634"/>
    </location>
    <ligand>
        <name>5-methyltetrahydropteroyltri-L-glutamate</name>
        <dbReference type="ChEBI" id="CHEBI:58207"/>
    </ligand>
</feature>
<feature type="binding site" evidence="1">
    <location>
        <position position="670"/>
    </location>
    <ligand>
        <name>Zn(2+)</name>
        <dbReference type="ChEBI" id="CHEBI:29105"/>
        <note>catalytic</note>
    </ligand>
</feature>
<feature type="binding site" evidence="1">
    <location>
        <position position="672"/>
    </location>
    <ligand>
        <name>Zn(2+)</name>
        <dbReference type="ChEBI" id="CHEBI:29105"/>
        <note>catalytic</note>
    </ligand>
</feature>
<feature type="binding site" evidence="1">
    <location>
        <position position="694"/>
    </location>
    <ligand>
        <name>Zn(2+)</name>
        <dbReference type="ChEBI" id="CHEBI:29105"/>
        <note>catalytic</note>
    </ligand>
</feature>
<feature type="binding site" evidence="1">
    <location>
        <position position="755"/>
    </location>
    <ligand>
        <name>Zn(2+)</name>
        <dbReference type="ChEBI" id="CHEBI:29105"/>
        <note>catalytic</note>
    </ligand>
</feature>
<organism>
    <name type="scientific">Nitratidesulfovibrio vulgaris (strain ATCC 29579 / DSM 644 / CCUG 34227 / NCIMB 8303 / VKM B-1760 / Hildenborough)</name>
    <name type="common">Desulfovibrio vulgaris</name>
    <dbReference type="NCBI Taxonomy" id="882"/>
    <lineage>
        <taxon>Bacteria</taxon>
        <taxon>Pseudomonadati</taxon>
        <taxon>Thermodesulfobacteriota</taxon>
        <taxon>Desulfovibrionia</taxon>
        <taxon>Desulfovibrionales</taxon>
        <taxon>Desulfovibrionaceae</taxon>
        <taxon>Nitratidesulfovibrio</taxon>
    </lineage>
</organism>
<keyword id="KW-0028">Amino-acid biosynthesis</keyword>
<keyword id="KW-0479">Metal-binding</keyword>
<keyword id="KW-0486">Methionine biosynthesis</keyword>
<keyword id="KW-0489">Methyltransferase</keyword>
<keyword id="KW-1185">Reference proteome</keyword>
<keyword id="KW-0677">Repeat</keyword>
<keyword id="KW-0808">Transferase</keyword>
<keyword id="KW-0862">Zinc</keyword>
<evidence type="ECO:0000255" key="1">
    <source>
        <dbReference type="HAMAP-Rule" id="MF_00172"/>
    </source>
</evidence>
<accession>Q725Q3</accession>
<proteinExistence type="inferred from homology"/>
<protein>
    <recommendedName>
        <fullName evidence="1">5-methyltetrahydropteroyltriglutamate--homocysteine methyltransferase</fullName>
        <ecNumber evidence="1">2.1.1.14</ecNumber>
    </recommendedName>
    <alternativeName>
        <fullName evidence="1">Cobalamin-independent methionine synthase</fullName>
    </alternativeName>
    <alternativeName>
        <fullName evidence="1">Methionine synthase, vitamin-B12 independent isozyme</fullName>
    </alternativeName>
</protein>
<comment type="function">
    <text evidence="1">Catalyzes the transfer of a methyl group from 5-methyltetrahydrofolate to homocysteine resulting in methionine formation.</text>
</comment>
<comment type="catalytic activity">
    <reaction evidence="1">
        <text>5-methyltetrahydropteroyltri-L-glutamate + L-homocysteine = tetrahydropteroyltri-L-glutamate + L-methionine</text>
        <dbReference type="Rhea" id="RHEA:21196"/>
        <dbReference type="ChEBI" id="CHEBI:57844"/>
        <dbReference type="ChEBI" id="CHEBI:58140"/>
        <dbReference type="ChEBI" id="CHEBI:58199"/>
        <dbReference type="ChEBI" id="CHEBI:58207"/>
        <dbReference type="EC" id="2.1.1.14"/>
    </reaction>
</comment>
<comment type="cofactor">
    <cofactor evidence="1">
        <name>Zn(2+)</name>
        <dbReference type="ChEBI" id="CHEBI:29105"/>
    </cofactor>
    <text evidence="1">Binds 1 zinc ion per subunit.</text>
</comment>
<comment type="pathway">
    <text evidence="1">Amino-acid biosynthesis; L-methionine biosynthesis via de novo pathway; L-methionine from L-homocysteine (MetE route): step 1/1.</text>
</comment>
<comment type="similarity">
    <text evidence="1">Belongs to the vitamin-B12 independent methionine synthase family.</text>
</comment>